<dbReference type="EMBL" id="AF049461">
    <property type="protein sequence ID" value="AAC79678.1"/>
    <property type="molecule type" value="mRNA"/>
</dbReference>
<dbReference type="RefSeq" id="NP_001008974.1">
    <property type="nucleotide sequence ID" value="NM_001008974.1"/>
</dbReference>
<dbReference type="BMRB" id="O77562"/>
<dbReference type="SMR" id="O77562"/>
<dbReference type="FunCoup" id="O77562">
    <property type="interactions" value="2142"/>
</dbReference>
<dbReference type="STRING" id="9598.ENSPTRP00000071446"/>
<dbReference type="PaxDb" id="9598-ENSPTRP00000005519"/>
<dbReference type="GeneID" id="373853"/>
<dbReference type="KEGG" id="ptr:373853"/>
<dbReference type="CTD" id="10522"/>
<dbReference type="eggNOG" id="KOG4333">
    <property type="taxonomic scope" value="Eukaryota"/>
</dbReference>
<dbReference type="InParanoid" id="O77562"/>
<dbReference type="Proteomes" id="UP000002277">
    <property type="component" value="Unplaced"/>
</dbReference>
<dbReference type="GO" id="GO:0005634">
    <property type="term" value="C:nucleus"/>
    <property type="evidence" value="ECO:0000318"/>
    <property type="project" value="GO_Central"/>
</dbReference>
<dbReference type="GO" id="GO:0003677">
    <property type="term" value="F:DNA binding"/>
    <property type="evidence" value="ECO:0007669"/>
    <property type="project" value="UniProtKB-KW"/>
</dbReference>
<dbReference type="GO" id="GO:0000981">
    <property type="term" value="F:DNA-binding transcription factor activity, RNA polymerase II-specific"/>
    <property type="evidence" value="ECO:0000318"/>
    <property type="project" value="GO_Central"/>
</dbReference>
<dbReference type="GO" id="GO:0008270">
    <property type="term" value="F:zinc ion binding"/>
    <property type="evidence" value="ECO:0007669"/>
    <property type="project" value="UniProtKB-KW"/>
</dbReference>
<dbReference type="GO" id="GO:0048706">
    <property type="term" value="P:embryonic skeletal system development"/>
    <property type="evidence" value="ECO:0000250"/>
    <property type="project" value="UniProtKB"/>
</dbReference>
<dbReference type="GO" id="GO:0001843">
    <property type="term" value="P:neural tube closure"/>
    <property type="evidence" value="ECO:0000250"/>
    <property type="project" value="UniProtKB"/>
</dbReference>
<dbReference type="GO" id="GO:0033599">
    <property type="term" value="P:regulation of mammary gland epithelial cell proliferation"/>
    <property type="evidence" value="ECO:0000250"/>
    <property type="project" value="UniProtKB"/>
</dbReference>
<dbReference type="GO" id="GO:0006357">
    <property type="term" value="P:regulation of transcription by RNA polymerase II"/>
    <property type="evidence" value="ECO:0000318"/>
    <property type="project" value="GO_Central"/>
</dbReference>
<dbReference type="FunFam" id="3.10.390.10:FF:000004">
    <property type="entry name" value="Deformed epidermal autoregulatory factor 1"/>
    <property type="match status" value="1"/>
</dbReference>
<dbReference type="FunFam" id="6.10.140.2220:FF:000008">
    <property type="entry name" value="Deformed epidermal autoregulatory factor 1"/>
    <property type="match status" value="1"/>
</dbReference>
<dbReference type="Gene3D" id="6.10.140.2220">
    <property type="match status" value="1"/>
</dbReference>
<dbReference type="Gene3D" id="3.10.390.10">
    <property type="entry name" value="SAND domain-like"/>
    <property type="match status" value="1"/>
</dbReference>
<dbReference type="InterPro" id="IPR010919">
    <property type="entry name" value="SAND-like_dom_sf"/>
</dbReference>
<dbReference type="InterPro" id="IPR000770">
    <property type="entry name" value="SAND_dom"/>
</dbReference>
<dbReference type="InterPro" id="IPR024119">
    <property type="entry name" value="TF_DEAF-1"/>
</dbReference>
<dbReference type="InterPro" id="IPR002893">
    <property type="entry name" value="Znf_MYND"/>
</dbReference>
<dbReference type="PANTHER" id="PTHR10237:SF1">
    <property type="entry name" value="DEFORMED EPIDERMAL AUTOREGULATORY FACTOR 1 HOMOLOG"/>
    <property type="match status" value="1"/>
</dbReference>
<dbReference type="PANTHER" id="PTHR10237">
    <property type="entry name" value="DEFORMED EPIDERMAL AUTOREGULATORY FACTOR 1 HOMOLOG SUPPRESSIN"/>
    <property type="match status" value="1"/>
</dbReference>
<dbReference type="Pfam" id="PF01342">
    <property type="entry name" value="SAND"/>
    <property type="match status" value="1"/>
</dbReference>
<dbReference type="Pfam" id="PF01753">
    <property type="entry name" value="zf-MYND"/>
    <property type="match status" value="1"/>
</dbReference>
<dbReference type="SMART" id="SM00258">
    <property type="entry name" value="SAND"/>
    <property type="match status" value="1"/>
</dbReference>
<dbReference type="SUPFAM" id="SSF144232">
    <property type="entry name" value="HIT/MYND zinc finger-like"/>
    <property type="match status" value="1"/>
</dbReference>
<dbReference type="SUPFAM" id="SSF63763">
    <property type="entry name" value="SAND domain-like"/>
    <property type="match status" value="1"/>
</dbReference>
<dbReference type="PROSITE" id="PS50864">
    <property type="entry name" value="SAND"/>
    <property type="match status" value="1"/>
</dbReference>
<dbReference type="PROSITE" id="PS01360">
    <property type="entry name" value="ZF_MYND_1"/>
    <property type="match status" value="1"/>
</dbReference>
<dbReference type="PROSITE" id="PS50865">
    <property type="entry name" value="ZF_MYND_2"/>
    <property type="match status" value="1"/>
</dbReference>
<name>DEAF1_PANTR</name>
<keyword id="KW-0217">Developmental protein</keyword>
<keyword id="KW-0238">DNA-binding</keyword>
<keyword id="KW-0479">Metal-binding</keyword>
<keyword id="KW-0524">Neurogenesis</keyword>
<keyword id="KW-0539">Nucleus</keyword>
<keyword id="KW-0597">Phosphoprotein</keyword>
<keyword id="KW-1185">Reference proteome</keyword>
<keyword id="KW-0804">Transcription</keyword>
<keyword id="KW-0805">Transcription regulation</keyword>
<keyword id="KW-0862">Zinc</keyword>
<keyword id="KW-0863">Zinc-finger</keyword>
<organism>
    <name type="scientific">Pan troglodytes</name>
    <name type="common">Chimpanzee</name>
    <dbReference type="NCBI Taxonomy" id="9598"/>
    <lineage>
        <taxon>Eukaryota</taxon>
        <taxon>Metazoa</taxon>
        <taxon>Chordata</taxon>
        <taxon>Craniata</taxon>
        <taxon>Vertebrata</taxon>
        <taxon>Euteleostomi</taxon>
        <taxon>Mammalia</taxon>
        <taxon>Eutheria</taxon>
        <taxon>Euarchontoglires</taxon>
        <taxon>Primates</taxon>
        <taxon>Haplorrhini</taxon>
        <taxon>Catarrhini</taxon>
        <taxon>Hominidae</taxon>
        <taxon>Pan</taxon>
    </lineage>
</organism>
<reference key="1">
    <citation type="journal article" date="1998" name="Mol. Endocrinol.">
        <title>Characterization of a nuclear deformed epidermal autoregulatory factor-1 (DEAF-1)-related (NUDR) transcriptional regulator protein.</title>
        <authorList>
            <person name="Huggenvik J.I."/>
            <person name="Michelson R.J."/>
            <person name="Collard M.W."/>
            <person name="Ziemba A.J."/>
            <person name="Gurley P."/>
            <person name="Mowen K.A."/>
        </authorList>
    </citation>
    <scope>NUCLEOTIDE SEQUENCE [MRNA]</scope>
    <source>
        <tissue>Kidney</tissue>
    </source>
</reference>
<sequence length="565" mass="59341">MEDSDSAAKQLGLAEAAAVAAAAAVAAAAAAAAGGEAEEPVLSRDEDSEEDADSEAERETPRVTAVAVMAAEPGHMDMGAEALPGPDETAAAAAFAEVTTVTVANVGAAADNVFTTSVANAASISGHVLSGRTALQIGDSLNTEKATLIVVHTDGSIVETTGLKGPAAPLTPGPQSPPTPLAPGQEKGGTKYNWDPSVYDSELPVRCRNISGTLYKNRLGSGGRGRCIKQGENWYSPTEFEAMAGRASSKDWKRSIRYAGRPLQCLIQDGILNPHAASCTCAACCDNMTLSGPVRLFVPYKRRKKENELPTTPVKKDSPKNITLLPATAATTFTVTPSGQITTSGALTFDRASTVEATAVISESPAQGDVFAGATVQEASVQPPCRASHPEPHYPGYQDSCQIAPFPEAALPTSHPKIVLTSLPALAVPPPTPTKAAPPALVNGLELSEPRSWLYLEEMVNSLLTTAQQLKTLFEQAKHASTYREAAANQAKIHADAERKEQSCVNCGREAMNECTGCHKVNYCSTFCQRKDWKDHQHICGQSAAVTVQADEVHVAESVMEKVTV</sequence>
<protein>
    <recommendedName>
        <fullName>Deformed epidermal autoregulatory factor 1 homolog</fullName>
    </recommendedName>
    <alternativeName>
        <fullName>Nuclear DEAF-1-related transcriptional regulator</fullName>
        <shortName>NUDR</shortName>
    </alternativeName>
</protein>
<comment type="function">
    <text evidence="2 4">Transcription factor that binds to sequence with multiple copies of 5'-TTC[CG]G-3' present in its own promoter and that of the HNRPA2B1 gene. Down-regulates transcription of these genes. Binds to the retinoic acid response element (RARE) 5'-AGGGTTCACCGAAAGTTCA-3'. Activates the proenkephalin gene independently of promoter binding, probably through protein-protein interaction. Regulates epithelial cell proliferation and side-branching in the mammary gland. Required for neural tube closure and skeletal patterning. Controls the expression of peripheral tissue antigens in pancreatic lymph nodes. Transcriptional activator of EIF4G3. May also involved in behavior (By similarity).</text>
</comment>
<comment type="subunit">
    <text evidence="1">Homodimer (By similarity). Interacts with LMO4; LMO4 blocks export from nucleus. Interacts with LMO2 and CLIM2 (By similarity). May interact with the corepressors NCOR1 and NCRO2. Identified in a complex with XRCC5 and XRCC6. Interacts (via the SAND domain) with the DNA-PK complex subunit XRCC6; the interaction is direct and may be inhibited by DNA-binding (By similarity).</text>
</comment>
<comment type="subcellular location">
    <subcellularLocation>
        <location evidence="7">Nucleus</location>
    </subcellularLocation>
</comment>
<comment type="PTM">
    <text evidence="1">May be phosphorylated by DNA-PK complex in a DNA independent manner (in vitro).</text>
</comment>
<evidence type="ECO:0000250" key="1"/>
<evidence type="ECO:0000250" key="2">
    <source>
        <dbReference type="UniProtKB" id="O75398"/>
    </source>
</evidence>
<evidence type="ECO:0000250" key="3">
    <source>
        <dbReference type="UniProtKB" id="O88450"/>
    </source>
</evidence>
<evidence type="ECO:0000250" key="4">
    <source>
        <dbReference type="UniProtKB" id="Q9Z1T5"/>
    </source>
</evidence>
<evidence type="ECO:0000255" key="5"/>
<evidence type="ECO:0000255" key="6">
    <source>
        <dbReference type="PROSITE-ProRule" id="PRU00134"/>
    </source>
</evidence>
<evidence type="ECO:0000255" key="7">
    <source>
        <dbReference type="PROSITE-ProRule" id="PRU00185"/>
    </source>
</evidence>
<evidence type="ECO:0000256" key="8">
    <source>
        <dbReference type="SAM" id="MobiDB-lite"/>
    </source>
</evidence>
<proteinExistence type="evidence at transcript level"/>
<accession>O77562</accession>
<gene>
    <name type="primary">DEAF1</name>
</gene>
<feature type="chain" id="PRO_0000074086" description="Deformed epidermal autoregulatory factor 1 homolog">
    <location>
        <begin position="1"/>
        <end position="565"/>
    </location>
</feature>
<feature type="domain" description="SAND" evidence="7">
    <location>
        <begin position="193"/>
        <end position="273"/>
    </location>
</feature>
<feature type="zinc finger region" description="MYND-type" evidence="6">
    <location>
        <begin position="504"/>
        <end position="540"/>
    </location>
</feature>
<feature type="region of interest" description="Disordered" evidence="8">
    <location>
        <begin position="34"/>
        <end position="62"/>
    </location>
</feature>
<feature type="region of interest" description="Disordered" evidence="8">
    <location>
        <begin position="162"/>
        <end position="190"/>
    </location>
</feature>
<feature type="region of interest" description="Interaction with LMO4" evidence="1">
    <location>
        <begin position="403"/>
        <end position="478"/>
    </location>
</feature>
<feature type="short sequence motif" description="Nuclear localization signal" evidence="5">
    <location>
        <begin position="301"/>
        <end position="316"/>
    </location>
</feature>
<feature type="compositionally biased region" description="Pro residues" evidence="8">
    <location>
        <begin position="169"/>
        <end position="181"/>
    </location>
</feature>
<feature type="binding site" evidence="6">
    <location>
        <position position="504"/>
    </location>
    <ligand>
        <name>Zn(2+)</name>
        <dbReference type="ChEBI" id="CHEBI:29105"/>
        <label>1</label>
    </ligand>
</feature>
<feature type="binding site" evidence="6">
    <location>
        <position position="507"/>
    </location>
    <ligand>
        <name>Zn(2+)</name>
        <dbReference type="ChEBI" id="CHEBI:29105"/>
        <label>1</label>
    </ligand>
</feature>
<feature type="binding site" evidence="6">
    <location>
        <position position="515"/>
    </location>
    <ligand>
        <name>Zn(2+)</name>
        <dbReference type="ChEBI" id="CHEBI:29105"/>
        <label>2</label>
    </ligand>
</feature>
<feature type="binding site" evidence="6">
    <location>
        <position position="518"/>
    </location>
    <ligand>
        <name>Zn(2+)</name>
        <dbReference type="ChEBI" id="CHEBI:29105"/>
        <label>2</label>
    </ligand>
</feature>
<feature type="binding site" evidence="6">
    <location>
        <position position="524"/>
    </location>
    <ligand>
        <name>Zn(2+)</name>
        <dbReference type="ChEBI" id="CHEBI:29105"/>
        <label>1</label>
    </ligand>
</feature>
<feature type="binding site" evidence="6">
    <location>
        <position position="528"/>
    </location>
    <ligand>
        <name>Zn(2+)</name>
        <dbReference type="ChEBI" id="CHEBI:29105"/>
        <label>1</label>
    </ligand>
</feature>
<feature type="binding site" evidence="6">
    <location>
        <position position="536"/>
    </location>
    <ligand>
        <name>Zn(2+)</name>
        <dbReference type="ChEBI" id="CHEBI:29105"/>
        <label>2</label>
    </ligand>
</feature>
<feature type="binding site" evidence="6">
    <location>
        <position position="540"/>
    </location>
    <ligand>
        <name>Zn(2+)</name>
        <dbReference type="ChEBI" id="CHEBI:29105"/>
        <label>2</label>
    </ligand>
</feature>
<feature type="modified residue" description="Phosphothreonine" evidence="4">
    <location>
        <position position="171"/>
    </location>
</feature>
<feature type="modified residue" description="Phosphoserine" evidence="2">
    <location>
        <position position="176"/>
    </location>
</feature>
<feature type="modified residue" description="Phosphothreonine" evidence="4">
    <location>
        <position position="179"/>
    </location>
</feature>
<feature type="modified residue" description="Phosphothreonine" evidence="2">
    <location>
        <position position="432"/>
    </location>
</feature>
<feature type="modified residue" description="Phosphoserine" evidence="3">
    <location>
        <position position="448"/>
    </location>
</feature>